<proteinExistence type="inferred from homology"/>
<feature type="chain" id="PRO_0000267230" description="dTTP/UTP pyrophosphatase">
    <location>
        <begin position="1"/>
        <end position="191"/>
    </location>
</feature>
<feature type="active site" description="Proton acceptor" evidence="1">
    <location>
        <position position="69"/>
    </location>
</feature>
<feature type="site" description="Important for substrate specificity" evidence="1">
    <location>
        <position position="12"/>
    </location>
</feature>
<feature type="site" description="Important for substrate specificity" evidence="1">
    <location>
        <position position="70"/>
    </location>
</feature>
<feature type="site" description="Important for substrate specificity" evidence="1">
    <location>
        <position position="152"/>
    </location>
</feature>
<sequence length="191" mass="21035">MRKIILASGSPRRKELLELAGVPFEIIVSEVEETIGAYSSPSDIVMSLALQKASAVAENNSDHIVLGADTIVTYESRILGKPSNEAEAKEMLQLLSGKTHEVYTGVAIIAKDKTVTFYERTEVTFWELTEEEIDAYIASKEPLDKAGSYGIQGKGSIFVQHIQGDYYSVVGLPISRLVRELKQFNIDVTHA</sequence>
<gene>
    <name type="primary">maf</name>
    <name type="ordered locus">BCE33L4199</name>
</gene>
<dbReference type="EC" id="3.6.1.9" evidence="1"/>
<dbReference type="EMBL" id="CP000001">
    <property type="protein sequence ID" value="AAU16071.1"/>
    <property type="molecule type" value="Genomic_DNA"/>
</dbReference>
<dbReference type="RefSeq" id="WP_001226271.1">
    <property type="nucleotide sequence ID" value="NC_006274.1"/>
</dbReference>
<dbReference type="SMR" id="Q633Y9"/>
<dbReference type="KEGG" id="bcz:BCE33L4199"/>
<dbReference type="PATRIC" id="fig|288681.22.peg.1184"/>
<dbReference type="Proteomes" id="UP000002612">
    <property type="component" value="Chromosome"/>
</dbReference>
<dbReference type="GO" id="GO:0005737">
    <property type="term" value="C:cytoplasm"/>
    <property type="evidence" value="ECO:0007669"/>
    <property type="project" value="UniProtKB-SubCell"/>
</dbReference>
<dbReference type="GO" id="GO:0036218">
    <property type="term" value="F:dTTP diphosphatase activity"/>
    <property type="evidence" value="ECO:0007669"/>
    <property type="project" value="RHEA"/>
</dbReference>
<dbReference type="GO" id="GO:0036221">
    <property type="term" value="F:UTP diphosphatase activity"/>
    <property type="evidence" value="ECO:0007669"/>
    <property type="project" value="RHEA"/>
</dbReference>
<dbReference type="GO" id="GO:0009117">
    <property type="term" value="P:nucleotide metabolic process"/>
    <property type="evidence" value="ECO:0007669"/>
    <property type="project" value="UniProtKB-KW"/>
</dbReference>
<dbReference type="CDD" id="cd00555">
    <property type="entry name" value="Maf"/>
    <property type="match status" value="1"/>
</dbReference>
<dbReference type="FunFam" id="3.90.950.10:FF:000007">
    <property type="entry name" value="dTTP/UTP pyrophosphatase"/>
    <property type="match status" value="1"/>
</dbReference>
<dbReference type="Gene3D" id="3.90.950.10">
    <property type="match status" value="1"/>
</dbReference>
<dbReference type="HAMAP" id="MF_00528">
    <property type="entry name" value="Maf"/>
    <property type="match status" value="1"/>
</dbReference>
<dbReference type="InterPro" id="IPR029001">
    <property type="entry name" value="ITPase-like_fam"/>
</dbReference>
<dbReference type="InterPro" id="IPR003697">
    <property type="entry name" value="Maf-like"/>
</dbReference>
<dbReference type="NCBIfam" id="TIGR00172">
    <property type="entry name" value="maf"/>
    <property type="match status" value="1"/>
</dbReference>
<dbReference type="PANTHER" id="PTHR43213">
    <property type="entry name" value="BIFUNCTIONAL DTTP/UTP PYROPHOSPHATASE/METHYLTRANSFERASE PROTEIN-RELATED"/>
    <property type="match status" value="1"/>
</dbReference>
<dbReference type="PANTHER" id="PTHR43213:SF5">
    <property type="entry name" value="BIFUNCTIONAL DTTP_UTP PYROPHOSPHATASE_METHYLTRANSFERASE PROTEIN-RELATED"/>
    <property type="match status" value="1"/>
</dbReference>
<dbReference type="Pfam" id="PF02545">
    <property type="entry name" value="Maf"/>
    <property type="match status" value="1"/>
</dbReference>
<dbReference type="PIRSF" id="PIRSF006305">
    <property type="entry name" value="Maf"/>
    <property type="match status" value="1"/>
</dbReference>
<dbReference type="SUPFAM" id="SSF52972">
    <property type="entry name" value="ITPase-like"/>
    <property type="match status" value="1"/>
</dbReference>
<protein>
    <recommendedName>
        <fullName evidence="1">dTTP/UTP pyrophosphatase</fullName>
        <shortName evidence="1">dTTPase/UTPase</shortName>
        <ecNumber evidence="1">3.6.1.9</ecNumber>
    </recommendedName>
    <alternativeName>
        <fullName evidence="1">Nucleoside triphosphate pyrophosphatase</fullName>
    </alternativeName>
    <alternativeName>
        <fullName evidence="1">Nucleotide pyrophosphatase</fullName>
        <shortName evidence="1">Nucleotide PPase</shortName>
    </alternativeName>
</protein>
<organism>
    <name type="scientific">Bacillus cereus (strain ZK / E33L)</name>
    <dbReference type="NCBI Taxonomy" id="288681"/>
    <lineage>
        <taxon>Bacteria</taxon>
        <taxon>Bacillati</taxon>
        <taxon>Bacillota</taxon>
        <taxon>Bacilli</taxon>
        <taxon>Bacillales</taxon>
        <taxon>Bacillaceae</taxon>
        <taxon>Bacillus</taxon>
        <taxon>Bacillus cereus group</taxon>
    </lineage>
</organism>
<name>NTPPA_BACCZ</name>
<keyword id="KW-0963">Cytoplasm</keyword>
<keyword id="KW-0378">Hydrolase</keyword>
<keyword id="KW-0546">Nucleotide metabolism</keyword>
<accession>Q633Y9</accession>
<evidence type="ECO:0000255" key="1">
    <source>
        <dbReference type="HAMAP-Rule" id="MF_00528"/>
    </source>
</evidence>
<comment type="function">
    <text evidence="1">Nucleoside triphosphate pyrophosphatase that hydrolyzes dTTP and UTP. May have a dual role in cell division arrest and in preventing the incorporation of modified nucleotides into cellular nucleic acids.</text>
</comment>
<comment type="catalytic activity">
    <reaction evidence="1">
        <text>dTTP + H2O = dTMP + diphosphate + H(+)</text>
        <dbReference type="Rhea" id="RHEA:28534"/>
        <dbReference type="ChEBI" id="CHEBI:15377"/>
        <dbReference type="ChEBI" id="CHEBI:15378"/>
        <dbReference type="ChEBI" id="CHEBI:33019"/>
        <dbReference type="ChEBI" id="CHEBI:37568"/>
        <dbReference type="ChEBI" id="CHEBI:63528"/>
        <dbReference type="EC" id="3.6.1.9"/>
    </reaction>
</comment>
<comment type="catalytic activity">
    <reaction evidence="1">
        <text>UTP + H2O = UMP + diphosphate + H(+)</text>
        <dbReference type="Rhea" id="RHEA:29395"/>
        <dbReference type="ChEBI" id="CHEBI:15377"/>
        <dbReference type="ChEBI" id="CHEBI:15378"/>
        <dbReference type="ChEBI" id="CHEBI:33019"/>
        <dbReference type="ChEBI" id="CHEBI:46398"/>
        <dbReference type="ChEBI" id="CHEBI:57865"/>
        <dbReference type="EC" id="3.6.1.9"/>
    </reaction>
</comment>
<comment type="cofactor">
    <cofactor evidence="1">
        <name>a divalent metal cation</name>
        <dbReference type="ChEBI" id="CHEBI:60240"/>
    </cofactor>
</comment>
<comment type="subcellular location">
    <subcellularLocation>
        <location evidence="1">Cytoplasm</location>
    </subcellularLocation>
</comment>
<comment type="similarity">
    <text evidence="1">Belongs to the Maf family. YhdE subfamily.</text>
</comment>
<reference key="1">
    <citation type="journal article" date="2006" name="J. Bacteriol.">
        <title>Pathogenomic sequence analysis of Bacillus cereus and Bacillus thuringiensis isolates closely related to Bacillus anthracis.</title>
        <authorList>
            <person name="Han C.S."/>
            <person name="Xie G."/>
            <person name="Challacombe J.F."/>
            <person name="Altherr M.R."/>
            <person name="Bhotika S.S."/>
            <person name="Bruce D."/>
            <person name="Campbell C.S."/>
            <person name="Campbell M.L."/>
            <person name="Chen J."/>
            <person name="Chertkov O."/>
            <person name="Cleland C."/>
            <person name="Dimitrijevic M."/>
            <person name="Doggett N.A."/>
            <person name="Fawcett J.J."/>
            <person name="Glavina T."/>
            <person name="Goodwin L.A."/>
            <person name="Hill K.K."/>
            <person name="Hitchcock P."/>
            <person name="Jackson P.J."/>
            <person name="Keim P."/>
            <person name="Kewalramani A.R."/>
            <person name="Longmire J."/>
            <person name="Lucas S."/>
            <person name="Malfatti S."/>
            <person name="McMurry K."/>
            <person name="Meincke L.J."/>
            <person name="Misra M."/>
            <person name="Moseman B.L."/>
            <person name="Mundt M."/>
            <person name="Munk A.C."/>
            <person name="Okinaka R.T."/>
            <person name="Parson-Quintana B."/>
            <person name="Reilly L.P."/>
            <person name="Richardson P."/>
            <person name="Robinson D.L."/>
            <person name="Rubin E."/>
            <person name="Saunders E."/>
            <person name="Tapia R."/>
            <person name="Tesmer J.G."/>
            <person name="Thayer N."/>
            <person name="Thompson L.S."/>
            <person name="Tice H."/>
            <person name="Ticknor L.O."/>
            <person name="Wills P.L."/>
            <person name="Brettin T.S."/>
            <person name="Gilna P."/>
        </authorList>
    </citation>
    <scope>NUCLEOTIDE SEQUENCE [LARGE SCALE GENOMIC DNA]</scope>
    <source>
        <strain>ZK / E33L</strain>
    </source>
</reference>